<evidence type="ECO:0000305" key="1"/>
<sequence>MINEDIDILSLDNKIKLHFESEIQKYKRYNERLLCIENLLKIENLRPKIFLDLLMDKKYLEKKLVNLSNLDLYSIETSDIIHRYLTIINTPLNIEVALTSQKPTEINNLVLKRRETVQEFIKVAKSYLTEPLLKSLQLMGNFGKEDLLNSIPVVCTCGNDKDFYKDDDIYICQLCNAETVKLLNSSSVNDGGRINVCNKYTYDRKVHFKDCINQYQGKQNTNINPRIYDELEEQLVNHQIIEPANKKDKFGNPISQSKRFKIVTRAHILFFLKELGYTKHYEDTILIHYTLTGKRPDNIEHLEEKLMADFDKLTEQYDLLFKDIERKNFINTQYVLFQLLRKHGYNCNKDDFAVLKTTERKACHDDICKTLFDALGWKYMFVM</sequence>
<reference key="1">
    <citation type="journal article" date="2001" name="Virology">
        <title>Analysis of the first complete DNA sequence of an invertebrate iridovirus: coding strategy of the genome of Chilo iridescent virus.</title>
        <authorList>
            <person name="Jakob N.J."/>
            <person name="Mueller K."/>
            <person name="Bahr U."/>
            <person name="Darai G."/>
        </authorList>
    </citation>
    <scope>NUCLEOTIDE SEQUENCE [LARGE SCALE GENOMIC DNA]</scope>
</reference>
<reference key="2">
    <citation type="journal article" date="2007" name="Virol. J.">
        <title>Comparative genomic analysis of the family Iridoviridae: re-annotating and defining the core set of iridovirus genes.</title>
        <authorList>
            <person name="Eaton H.E."/>
            <person name="Metcalf J."/>
            <person name="Penny E."/>
            <person name="Tcherepanov V."/>
            <person name="Upton C."/>
            <person name="Brunetti C.R."/>
        </authorList>
    </citation>
    <scope>GENOME REANNOTATION</scope>
</reference>
<comment type="function">
    <text evidence="1">Transcription activation.</text>
</comment>
<comment type="similarity">
    <text evidence="1">Belongs to the IIV-6 282R family.</text>
</comment>
<protein>
    <recommendedName>
        <fullName>Putative transcription factor 282R</fullName>
    </recommendedName>
</protein>
<name>VF282_IIV6</name>
<organismHost>
    <name type="scientific">Acheta domesticus</name>
    <name type="common">House cricket</name>
    <dbReference type="NCBI Taxonomy" id="6997"/>
</organismHost>
<organismHost>
    <name type="scientific">Chilo suppressalis</name>
    <name type="common">Asiatic rice borer moth</name>
    <dbReference type="NCBI Taxonomy" id="168631"/>
</organismHost>
<organismHost>
    <name type="scientific">Gryllus bimaculatus</name>
    <name type="common">Two-spotted cricket</name>
    <dbReference type="NCBI Taxonomy" id="6999"/>
</organismHost>
<organismHost>
    <name type="scientific">Gryllus campestris</name>
    <dbReference type="NCBI Taxonomy" id="58607"/>
</organismHost>
<organismHost>
    <name type="scientific">Spodoptera frugiperda</name>
    <name type="common">Fall armyworm</name>
    <dbReference type="NCBI Taxonomy" id="7108"/>
</organismHost>
<proteinExistence type="inferred from homology"/>
<dbReference type="EMBL" id="AF303741">
    <property type="protein sequence ID" value="AAK82143.1"/>
    <property type="molecule type" value="Genomic_DNA"/>
</dbReference>
<dbReference type="RefSeq" id="NP_149745.1">
    <property type="nucleotide sequence ID" value="NC_003038.1"/>
</dbReference>
<dbReference type="GeneID" id="1733031"/>
<dbReference type="KEGG" id="vg:1733031"/>
<dbReference type="OrthoDB" id="8889at10239"/>
<dbReference type="Proteomes" id="UP000001359">
    <property type="component" value="Genome"/>
</dbReference>
<dbReference type="GO" id="GO:0046782">
    <property type="term" value="P:regulation of viral transcription"/>
    <property type="evidence" value="ECO:0007669"/>
    <property type="project" value="InterPro"/>
</dbReference>
<dbReference type="InterPro" id="IPR007031">
    <property type="entry name" value="Poxvirus_VLTF3"/>
</dbReference>
<dbReference type="InterPro" id="IPR014900">
    <property type="entry name" value="VLTF-3_Zn_ribbon"/>
</dbReference>
<dbReference type="Pfam" id="PF08792">
    <property type="entry name" value="A2L_zn_ribbon"/>
    <property type="match status" value="1"/>
</dbReference>
<dbReference type="Pfam" id="PF04947">
    <property type="entry name" value="Pox_VLTF3"/>
    <property type="match status" value="1"/>
</dbReference>
<organism>
    <name type="scientific">Invertebrate iridescent virus 6</name>
    <name type="common">IIV-6</name>
    <name type="synonym">Chilo iridescent virus</name>
    <dbReference type="NCBI Taxonomy" id="176652"/>
    <lineage>
        <taxon>Viruses</taxon>
        <taxon>Varidnaviria</taxon>
        <taxon>Bamfordvirae</taxon>
        <taxon>Nucleocytoviricota</taxon>
        <taxon>Megaviricetes</taxon>
        <taxon>Pimascovirales</taxon>
        <taxon>Iridoviridae</taxon>
        <taxon>Betairidovirinae</taxon>
        <taxon>Iridovirus</taxon>
    </lineage>
</organism>
<keyword id="KW-0010">Activator</keyword>
<keyword id="KW-1185">Reference proteome</keyword>
<keyword id="KW-0804">Transcription</keyword>
<keyword id="KW-0805">Transcription regulation</keyword>
<feature type="chain" id="PRO_0000377765" description="Putative transcription factor 282R">
    <location>
        <begin position="1"/>
        <end position="383"/>
    </location>
</feature>
<accession>Q91FP2</accession>